<comment type="function">
    <text evidence="1">Converts 2-succinylbenzoate (OSB) to 2-succinylbenzoyl-CoA (OSB-CoA).</text>
</comment>
<comment type="catalytic activity">
    <reaction evidence="1">
        <text>2-succinylbenzoate + ATP + CoA = 2-succinylbenzoyl-CoA + AMP + diphosphate</text>
        <dbReference type="Rhea" id="RHEA:17009"/>
        <dbReference type="ChEBI" id="CHEBI:18325"/>
        <dbReference type="ChEBI" id="CHEBI:30616"/>
        <dbReference type="ChEBI" id="CHEBI:33019"/>
        <dbReference type="ChEBI" id="CHEBI:57287"/>
        <dbReference type="ChEBI" id="CHEBI:57364"/>
        <dbReference type="ChEBI" id="CHEBI:456215"/>
        <dbReference type="EC" id="6.2.1.26"/>
    </reaction>
</comment>
<comment type="pathway">
    <text evidence="1">Quinol/quinone metabolism; 1,4-dihydroxy-2-naphthoate biosynthesis; 1,4-dihydroxy-2-naphthoate from chorismate: step 5/7.</text>
</comment>
<comment type="pathway">
    <text evidence="1">Quinol/quinone metabolism; menaquinone biosynthesis.</text>
</comment>
<comment type="similarity">
    <text evidence="1">Belongs to the ATP-dependent AMP-binding enzyme family. MenE subfamily.</text>
</comment>
<dbReference type="EC" id="6.2.1.26" evidence="1"/>
<dbReference type="EMBL" id="BX571857">
    <property type="protein sequence ID" value="CAG43521.1"/>
    <property type="molecule type" value="Genomic_DNA"/>
</dbReference>
<dbReference type="RefSeq" id="WP_000348356.1">
    <property type="nucleotide sequence ID" value="NC_002953.3"/>
</dbReference>
<dbReference type="SMR" id="Q6G8D6"/>
<dbReference type="KEGG" id="sas:SAS1717"/>
<dbReference type="HOGENOM" id="CLU_000022_59_0_9"/>
<dbReference type="UniPathway" id="UPA00079"/>
<dbReference type="UniPathway" id="UPA01057">
    <property type="reaction ID" value="UER00166"/>
</dbReference>
<dbReference type="GO" id="GO:0005524">
    <property type="term" value="F:ATP binding"/>
    <property type="evidence" value="ECO:0007669"/>
    <property type="project" value="UniProtKB-KW"/>
</dbReference>
<dbReference type="GO" id="GO:0008756">
    <property type="term" value="F:o-succinylbenzoate-CoA ligase activity"/>
    <property type="evidence" value="ECO:0007669"/>
    <property type="project" value="UniProtKB-UniRule"/>
</dbReference>
<dbReference type="GO" id="GO:0009234">
    <property type="term" value="P:menaquinone biosynthetic process"/>
    <property type="evidence" value="ECO:0007669"/>
    <property type="project" value="UniProtKB-UniRule"/>
</dbReference>
<dbReference type="CDD" id="cd05912">
    <property type="entry name" value="OSB_CoA_lg"/>
    <property type="match status" value="1"/>
</dbReference>
<dbReference type="Gene3D" id="3.30.300.30">
    <property type="match status" value="1"/>
</dbReference>
<dbReference type="Gene3D" id="3.40.50.12780">
    <property type="entry name" value="N-terminal domain of ligase-like"/>
    <property type="match status" value="1"/>
</dbReference>
<dbReference type="HAMAP" id="MF_00731">
    <property type="entry name" value="MenE"/>
    <property type="match status" value="1"/>
</dbReference>
<dbReference type="InterPro" id="IPR025110">
    <property type="entry name" value="AMP-bd_C"/>
</dbReference>
<dbReference type="InterPro" id="IPR045851">
    <property type="entry name" value="AMP-bd_C_sf"/>
</dbReference>
<dbReference type="InterPro" id="IPR000873">
    <property type="entry name" value="AMP-dep_synth/lig_dom"/>
</dbReference>
<dbReference type="InterPro" id="IPR042099">
    <property type="entry name" value="ANL_N_sf"/>
</dbReference>
<dbReference type="InterPro" id="IPR050237">
    <property type="entry name" value="ATP-dep_AMP-bd_enzyme"/>
</dbReference>
<dbReference type="InterPro" id="IPR010192">
    <property type="entry name" value="MenE"/>
</dbReference>
<dbReference type="NCBIfam" id="TIGR01923">
    <property type="entry name" value="menE"/>
    <property type="match status" value="1"/>
</dbReference>
<dbReference type="PANTHER" id="PTHR43767">
    <property type="entry name" value="LONG-CHAIN-FATTY-ACID--COA LIGASE"/>
    <property type="match status" value="1"/>
</dbReference>
<dbReference type="PANTHER" id="PTHR43767:SF1">
    <property type="entry name" value="NONRIBOSOMAL PEPTIDE SYNTHASE PES1 (EUROFUNG)-RELATED"/>
    <property type="match status" value="1"/>
</dbReference>
<dbReference type="Pfam" id="PF00501">
    <property type="entry name" value="AMP-binding"/>
    <property type="match status" value="1"/>
</dbReference>
<dbReference type="Pfam" id="PF13193">
    <property type="entry name" value="AMP-binding_C"/>
    <property type="match status" value="1"/>
</dbReference>
<dbReference type="SUPFAM" id="SSF56801">
    <property type="entry name" value="Acetyl-CoA synthetase-like"/>
    <property type="match status" value="1"/>
</dbReference>
<protein>
    <recommendedName>
        <fullName evidence="1">2-succinylbenzoate--CoA ligase</fullName>
        <ecNumber evidence="1">6.2.1.26</ecNumber>
    </recommendedName>
    <alternativeName>
        <fullName evidence="1">o-succinylbenzoyl-CoA synthetase</fullName>
        <shortName evidence="1">OSB-CoA synthetase</shortName>
    </alternativeName>
</protein>
<keyword id="KW-0067">ATP-binding</keyword>
<keyword id="KW-0436">Ligase</keyword>
<keyword id="KW-0474">Menaquinone biosynthesis</keyword>
<keyword id="KW-0547">Nucleotide-binding</keyword>
<evidence type="ECO:0000255" key="1">
    <source>
        <dbReference type="HAMAP-Rule" id="MF_00731"/>
    </source>
</evidence>
<accession>Q6G8D6</accession>
<feature type="chain" id="PRO_0000193170" description="2-succinylbenzoate--CoA ligase">
    <location>
        <begin position="1"/>
        <end position="492"/>
    </location>
</feature>
<gene>
    <name evidence="1" type="primary">menE</name>
    <name type="ordered locus">SAS1717</name>
</gene>
<reference key="1">
    <citation type="journal article" date="2004" name="Proc. Natl. Acad. Sci. U.S.A.">
        <title>Complete genomes of two clinical Staphylococcus aureus strains: evidence for the rapid evolution of virulence and drug resistance.</title>
        <authorList>
            <person name="Holden M.T.G."/>
            <person name="Feil E.J."/>
            <person name="Lindsay J.A."/>
            <person name="Peacock S.J."/>
            <person name="Day N.P.J."/>
            <person name="Enright M.C."/>
            <person name="Foster T.J."/>
            <person name="Moore C.E."/>
            <person name="Hurst L."/>
            <person name="Atkin R."/>
            <person name="Barron A."/>
            <person name="Bason N."/>
            <person name="Bentley S.D."/>
            <person name="Chillingworth C."/>
            <person name="Chillingworth T."/>
            <person name="Churcher C."/>
            <person name="Clark L."/>
            <person name="Corton C."/>
            <person name="Cronin A."/>
            <person name="Doggett J."/>
            <person name="Dowd L."/>
            <person name="Feltwell T."/>
            <person name="Hance Z."/>
            <person name="Harris B."/>
            <person name="Hauser H."/>
            <person name="Holroyd S."/>
            <person name="Jagels K."/>
            <person name="James K.D."/>
            <person name="Lennard N."/>
            <person name="Line A."/>
            <person name="Mayes R."/>
            <person name="Moule S."/>
            <person name="Mungall K."/>
            <person name="Ormond D."/>
            <person name="Quail M.A."/>
            <person name="Rabbinowitsch E."/>
            <person name="Rutherford K.M."/>
            <person name="Sanders M."/>
            <person name="Sharp S."/>
            <person name="Simmonds M."/>
            <person name="Stevens K."/>
            <person name="Whitehead S."/>
            <person name="Barrell B.G."/>
            <person name="Spratt B.G."/>
            <person name="Parkhill J."/>
        </authorList>
    </citation>
    <scope>NUCLEOTIDE SEQUENCE [LARGE SCALE GENOMIC DNA]</scope>
    <source>
        <strain>MSSA476</strain>
    </source>
</reference>
<proteinExistence type="inferred from homology"/>
<organism>
    <name type="scientific">Staphylococcus aureus (strain MSSA476)</name>
    <dbReference type="NCBI Taxonomy" id="282459"/>
    <lineage>
        <taxon>Bacteria</taxon>
        <taxon>Bacillati</taxon>
        <taxon>Bacillota</taxon>
        <taxon>Bacilli</taxon>
        <taxon>Bacillales</taxon>
        <taxon>Staphylococcaceae</taxon>
        <taxon>Staphylococcus</taxon>
    </lineage>
</organism>
<name>MENE_STAAS</name>
<sequence>MDFWLYKQAQQNGHHIAITDGQESYTYQNLYCEASLLAKRLKAYQQSRVGLYIDNSIQSIILIHACWLANIEIAMINTRLTPNEMKNQMRSIDVQLIFCTLPLELRGFQIVSLDDIEFAGTDITMNGLLDNTMDIQYDTSNETVVPKESPSNILNTSFNLDDIASIMFTSGTTGPQKAVPQTFRNHYASAIGCKESLGFDRDTNWLSVLPIYHISGLSVLLRAVIEGFTVRIVDKFNAEQILTIIKNERITHISLVPQTLNWLMQQGLHEPYNLQKILLGGAKLSATLIETALQYNLPIYNSFGMTETCSQFLTATPEMLHARPDTVGMPSANVDVKIKNPNKEGHGELMIKGANVMNGYLYPTDLTGTFENGYFNTGDIAEIDHEGYVMIYDRRKDLIISGGENIYPYQIETVAKQFPGISDAVCVGHPDDTWGQVPKLYFVSESDISKAQLIAYLSQHLAKYKVPKHFEKVDTLPYTSTGKLQRNKLYRG</sequence>